<organism>
    <name type="scientific">Halalkalibacterium halodurans (strain ATCC BAA-125 / DSM 18197 / FERM 7344 / JCM 9153 / C-125)</name>
    <name type="common">Bacillus halodurans</name>
    <dbReference type="NCBI Taxonomy" id="272558"/>
    <lineage>
        <taxon>Bacteria</taxon>
        <taxon>Bacillati</taxon>
        <taxon>Bacillota</taxon>
        <taxon>Bacilli</taxon>
        <taxon>Bacillales</taxon>
        <taxon>Bacillaceae</taxon>
        <taxon>Halalkalibacterium (ex Joshi et al. 2022)</taxon>
    </lineage>
</organism>
<keyword id="KW-0002">3D-structure</keyword>
<keyword id="KW-0067">ATP-binding</keyword>
<keyword id="KW-0460">Magnesium</keyword>
<keyword id="KW-0547">Nucleotide-binding</keyword>
<keyword id="KW-1185">Reference proteome</keyword>
<keyword id="KW-0808">Transferase</keyword>
<keyword id="KW-0819">tRNA processing</keyword>
<dbReference type="EC" id="2.5.1.75"/>
<dbReference type="EMBL" id="BA000004">
    <property type="protein sequence ID" value="BAB06085.1"/>
    <property type="molecule type" value="Genomic_DNA"/>
</dbReference>
<dbReference type="PIR" id="F83945">
    <property type="entry name" value="F83945"/>
</dbReference>
<dbReference type="RefSeq" id="WP_010898520.1">
    <property type="nucleotide sequence ID" value="NC_002570.2"/>
</dbReference>
<dbReference type="PDB" id="2QGN">
    <property type="method" value="X-ray"/>
    <property type="resolution" value="2.40 A"/>
    <property type="chains" value="A=1-314"/>
</dbReference>
<dbReference type="PDB" id="3EXA">
    <property type="method" value="X-ray"/>
    <property type="resolution" value="2.30 A"/>
    <property type="chains" value="A/B/C/D=1-314"/>
</dbReference>
<dbReference type="PDBsum" id="2QGN"/>
<dbReference type="PDBsum" id="3EXA"/>
<dbReference type="SMR" id="Q9KAC3"/>
<dbReference type="STRING" id="272558.gene:10728264"/>
<dbReference type="DNASU" id="891429"/>
<dbReference type="KEGG" id="bha:BH2366"/>
<dbReference type="eggNOG" id="COG0324">
    <property type="taxonomic scope" value="Bacteria"/>
</dbReference>
<dbReference type="HOGENOM" id="CLU_032616_0_1_9"/>
<dbReference type="OrthoDB" id="9776390at2"/>
<dbReference type="EvolutionaryTrace" id="Q9KAC3"/>
<dbReference type="Proteomes" id="UP000001258">
    <property type="component" value="Chromosome"/>
</dbReference>
<dbReference type="GO" id="GO:0005524">
    <property type="term" value="F:ATP binding"/>
    <property type="evidence" value="ECO:0007669"/>
    <property type="project" value="UniProtKB-UniRule"/>
</dbReference>
<dbReference type="GO" id="GO:0052381">
    <property type="term" value="F:tRNA dimethylallyltransferase activity"/>
    <property type="evidence" value="ECO:0007669"/>
    <property type="project" value="UniProtKB-UniRule"/>
</dbReference>
<dbReference type="GO" id="GO:0006400">
    <property type="term" value="P:tRNA modification"/>
    <property type="evidence" value="ECO:0007669"/>
    <property type="project" value="TreeGrafter"/>
</dbReference>
<dbReference type="FunFam" id="1.10.20.140:FF:000001">
    <property type="entry name" value="tRNA dimethylallyltransferase"/>
    <property type="match status" value="1"/>
</dbReference>
<dbReference type="Gene3D" id="1.10.20.140">
    <property type="match status" value="1"/>
</dbReference>
<dbReference type="Gene3D" id="3.40.50.300">
    <property type="entry name" value="P-loop containing nucleotide triphosphate hydrolases"/>
    <property type="match status" value="1"/>
</dbReference>
<dbReference type="HAMAP" id="MF_00185">
    <property type="entry name" value="IPP_trans"/>
    <property type="match status" value="1"/>
</dbReference>
<dbReference type="InterPro" id="IPR039657">
    <property type="entry name" value="Dimethylallyltransferase"/>
</dbReference>
<dbReference type="InterPro" id="IPR018022">
    <property type="entry name" value="IPT"/>
</dbReference>
<dbReference type="InterPro" id="IPR027417">
    <property type="entry name" value="P-loop_NTPase"/>
</dbReference>
<dbReference type="NCBIfam" id="TIGR00174">
    <property type="entry name" value="miaA"/>
    <property type="match status" value="1"/>
</dbReference>
<dbReference type="PANTHER" id="PTHR11088">
    <property type="entry name" value="TRNA DIMETHYLALLYLTRANSFERASE"/>
    <property type="match status" value="1"/>
</dbReference>
<dbReference type="PANTHER" id="PTHR11088:SF60">
    <property type="entry name" value="TRNA DIMETHYLALLYLTRANSFERASE"/>
    <property type="match status" value="1"/>
</dbReference>
<dbReference type="Pfam" id="PF01715">
    <property type="entry name" value="IPPT"/>
    <property type="match status" value="1"/>
</dbReference>
<dbReference type="SUPFAM" id="SSF52540">
    <property type="entry name" value="P-loop containing nucleoside triphosphate hydrolases"/>
    <property type="match status" value="2"/>
</dbReference>
<comment type="function">
    <text evidence="1">Catalyzes the transfer of a dimethylallyl group onto the adenine at position 37 in tRNAs that read codons beginning with uridine, leading to the formation of N6-(dimethylallyl)adenosine (i(6)A).</text>
</comment>
<comment type="catalytic activity">
    <reaction>
        <text>adenosine(37) in tRNA + dimethylallyl diphosphate = N(6)-dimethylallyladenosine(37) in tRNA + diphosphate</text>
        <dbReference type="Rhea" id="RHEA:26482"/>
        <dbReference type="Rhea" id="RHEA-COMP:10162"/>
        <dbReference type="Rhea" id="RHEA-COMP:10375"/>
        <dbReference type="ChEBI" id="CHEBI:33019"/>
        <dbReference type="ChEBI" id="CHEBI:57623"/>
        <dbReference type="ChEBI" id="CHEBI:74411"/>
        <dbReference type="ChEBI" id="CHEBI:74415"/>
        <dbReference type="EC" id="2.5.1.75"/>
    </reaction>
</comment>
<comment type="cofactor">
    <cofactor evidence="1">
        <name>Mg(2+)</name>
        <dbReference type="ChEBI" id="CHEBI:18420"/>
    </cofactor>
</comment>
<comment type="subunit">
    <text evidence="1">Monomer.</text>
</comment>
<comment type="similarity">
    <text evidence="3">Belongs to the IPP transferase family.</text>
</comment>
<feature type="chain" id="PRO_0000163873" description="tRNA dimethylallyltransferase">
    <location>
        <begin position="1"/>
        <end position="314"/>
    </location>
</feature>
<feature type="region of interest" description="Interaction with substrate tRNA" evidence="1">
    <location>
        <begin position="35"/>
        <end position="38"/>
    </location>
</feature>
<feature type="region of interest" description="Interaction with substrate tRNA" evidence="1">
    <location>
        <begin position="160"/>
        <end position="164"/>
    </location>
</feature>
<feature type="region of interest" description="Interaction with substrate tRNA" evidence="1">
    <location>
        <begin position="239"/>
        <end position="244"/>
    </location>
</feature>
<feature type="region of interest" description="Interaction with substrate tRNA" evidence="1">
    <location>
        <begin position="272"/>
        <end position="279"/>
    </location>
</feature>
<feature type="binding site" evidence="2">
    <location>
        <begin position="10"/>
        <end position="17"/>
    </location>
    <ligand>
        <name>ATP</name>
        <dbReference type="ChEBI" id="CHEBI:30616"/>
    </ligand>
</feature>
<feature type="binding site" evidence="1">
    <location>
        <begin position="12"/>
        <end position="17"/>
    </location>
    <ligand>
        <name>substrate</name>
    </ligand>
</feature>
<feature type="site" description="Interaction with substrate tRNA" evidence="1">
    <location>
        <position position="101"/>
    </location>
</feature>
<feature type="site" description="Interaction with substrate tRNA" evidence="1">
    <location>
        <position position="124"/>
    </location>
</feature>
<feature type="strand" evidence="5">
    <location>
        <begin position="4"/>
        <end position="9"/>
    </location>
</feature>
<feature type="helix" evidence="5">
    <location>
        <begin position="16"/>
        <end position="25"/>
    </location>
</feature>
<feature type="turn" evidence="5">
    <location>
        <begin position="26"/>
        <end position="28"/>
    </location>
</feature>
<feature type="strand" evidence="5">
    <location>
        <begin position="29"/>
        <end position="33"/>
    </location>
</feature>
<feature type="helix" evidence="5">
    <location>
        <begin position="36"/>
        <end position="39"/>
    </location>
</feature>
<feature type="turn" evidence="5">
    <location>
        <begin position="45"/>
        <end position="48"/>
    </location>
</feature>
<feature type="helix" evidence="5">
    <location>
        <begin position="52"/>
        <end position="55"/>
    </location>
</feature>
<feature type="strand" evidence="5">
    <location>
        <begin position="60"/>
        <end position="64"/>
    </location>
</feature>
<feature type="helix" evidence="5">
    <location>
        <begin position="74"/>
        <end position="90"/>
    </location>
</feature>
<feature type="strand" evidence="5">
    <location>
        <begin position="94"/>
        <end position="99"/>
    </location>
</feature>
<feature type="helix" evidence="5">
    <location>
        <begin position="102"/>
        <end position="110"/>
    </location>
</feature>
<feature type="helix" evidence="5">
    <location>
        <begin position="121"/>
        <end position="133"/>
    </location>
</feature>
<feature type="helix" evidence="5">
    <location>
        <begin position="136"/>
        <end position="144"/>
    </location>
</feature>
<feature type="helix" evidence="5">
    <location>
        <begin position="148"/>
        <end position="151"/>
    </location>
</feature>
<feature type="helix" evidence="5">
    <location>
        <begin position="159"/>
        <end position="171"/>
    </location>
</feature>
<feature type="strand" evidence="5">
    <location>
        <begin position="190"/>
        <end position="198"/>
    </location>
</feature>
<feature type="helix" evidence="5">
    <location>
        <begin position="201"/>
        <end position="218"/>
    </location>
</feature>
<feature type="helix" evidence="5">
    <location>
        <begin position="220"/>
        <end position="229"/>
    </location>
</feature>
<feature type="helix" evidence="5">
    <location>
        <begin position="237"/>
        <end position="239"/>
    </location>
</feature>
<feature type="turn" evidence="4">
    <location>
        <begin position="241"/>
        <end position="243"/>
    </location>
</feature>
<feature type="helix" evidence="5">
    <location>
        <begin position="244"/>
        <end position="250"/>
    </location>
</feature>
<feature type="helix" evidence="5">
    <location>
        <begin position="256"/>
        <end position="279"/>
    </location>
</feature>
<feature type="strand" evidence="4">
    <location>
        <begin position="281"/>
        <end position="283"/>
    </location>
</feature>
<feature type="strand" evidence="5">
    <location>
        <begin position="284"/>
        <end position="288"/>
    </location>
</feature>
<feature type="helix" evidence="5">
    <location>
        <begin position="294"/>
        <end position="314"/>
    </location>
</feature>
<name>MIAA_HALH5</name>
<sequence>MKEKLVAIVGPTAVGKTKTSVMLAKRLNGEVISGDSMQVYRGMDIGTAKITAEEMDGVPHHLIDIKDPSESFSVADFQDLATPLITEIHERGRLPFLVGGTGLYVNAVIHQFNLGDIRADEDYRHELEAFVNSYGVQALHDKLSKIDPKAAAAIHPNNYRRVIRALEIIKLTGKTVTEQARHEEETPSPYNLVMIGLTMERDVLYDRINRRVDQMVEEGLIDEAKKLYDRGIRDCQSVQAIGYKEMYDYLDGNVTLEEAIDTLKRNSRRYAKRQLTWFRNKANVTWFDMTDVDFDKKIMEIHNFIAGKLEEKSK</sequence>
<protein>
    <recommendedName>
        <fullName>tRNA dimethylallyltransferase</fullName>
        <ecNumber>2.5.1.75</ecNumber>
    </recommendedName>
    <alternativeName>
        <fullName>Dimethylallyl diphosphate:tRNA dimethylallyltransferase</fullName>
        <shortName>DMAPP:tRNA dimethylallyltransferase</shortName>
        <shortName>DMATase</shortName>
    </alternativeName>
    <alternativeName>
        <fullName>Isopentenyl-diphosphate:tRNA isopentenyltransferase</fullName>
        <shortName>IPP transferase</shortName>
        <shortName>IPPT</shortName>
        <shortName>IPTase</shortName>
    </alternativeName>
</protein>
<reference key="1">
    <citation type="journal article" date="2000" name="Nucleic Acids Res.">
        <title>Complete genome sequence of the alkaliphilic bacterium Bacillus halodurans and genomic sequence comparison with Bacillus subtilis.</title>
        <authorList>
            <person name="Takami H."/>
            <person name="Nakasone K."/>
            <person name="Takaki Y."/>
            <person name="Maeno G."/>
            <person name="Sasaki R."/>
            <person name="Masui N."/>
            <person name="Fuji F."/>
            <person name="Hirama C."/>
            <person name="Nakamura Y."/>
            <person name="Ogasawara N."/>
            <person name="Kuhara S."/>
            <person name="Horikoshi K."/>
        </authorList>
    </citation>
    <scope>NUCLEOTIDE SEQUENCE [LARGE SCALE GENOMIC DNA]</scope>
    <source>
        <strain>ATCC BAA-125 / DSM 18197 / FERM 7344 / JCM 9153 / C-125</strain>
    </source>
</reference>
<reference key="2">
    <citation type="submission" date="2009-02" db="PDB data bank">
        <title>Crystal structure of the full-length tRNA isopentenylpyrophosphate transferase (BH2366) from Bacillus halodurans, northeast structural genomics consortium target BHR41.</title>
        <authorList>
            <consortium name="Northeast structural genomics consortium (NESG)"/>
        </authorList>
    </citation>
    <scope>X-RAY CRYSTALLOGRAPHY (2.3 ANGSTROMS)</scope>
</reference>
<accession>Q9KAC3</accession>
<proteinExistence type="evidence at protein level"/>
<gene>
    <name type="primary">miaA</name>
    <name type="ordered locus">BH2366</name>
</gene>
<evidence type="ECO:0000250" key="1"/>
<evidence type="ECO:0000255" key="2"/>
<evidence type="ECO:0000305" key="3"/>
<evidence type="ECO:0007829" key="4">
    <source>
        <dbReference type="PDB" id="2QGN"/>
    </source>
</evidence>
<evidence type="ECO:0007829" key="5">
    <source>
        <dbReference type="PDB" id="3EXA"/>
    </source>
</evidence>